<proteinExistence type="inferred from homology"/>
<keyword id="KW-0963">Cytoplasm</keyword>
<keyword id="KW-1185">Reference proteome</keyword>
<keyword id="KW-0677">Repeat</keyword>
<keyword id="KW-0810">Translation regulation</keyword>
<feature type="chain" id="PRO_0000285398" description="Hsp70 nucleotide exchange factor fes-1">
    <location>
        <begin position="1"/>
        <end position="246"/>
    </location>
</feature>
<feature type="repeat" description="ARM 1">
    <location>
        <begin position="48"/>
        <end position="92"/>
    </location>
</feature>
<feature type="repeat" description="ARM 2">
    <location>
        <begin position="113"/>
        <end position="152"/>
    </location>
</feature>
<feature type="repeat" description="ARM 3">
    <location>
        <begin position="155"/>
        <end position="196"/>
    </location>
</feature>
<feature type="repeat" description="ARM 4">
    <location>
        <begin position="214"/>
        <end position="244"/>
    </location>
</feature>
<feature type="region of interest" description="Disordered" evidence="2">
    <location>
        <begin position="23"/>
        <end position="63"/>
    </location>
</feature>
<feature type="compositionally biased region" description="Polar residues" evidence="2">
    <location>
        <begin position="23"/>
        <end position="40"/>
    </location>
</feature>
<comment type="function">
    <text evidence="1">Functions as a nucleotide exchange factor (NEF) for Hsp70 chaperones which accelerates the release of ADP. Required for fully efficient Hsp70-mediated folding of proteins (By similarity).</text>
</comment>
<comment type="subcellular location">
    <subcellularLocation>
        <location evidence="1">Cytoplasm</location>
    </subcellularLocation>
</comment>
<comment type="similarity">
    <text evidence="3">Belongs to the FES1 family.</text>
</comment>
<organism>
    <name type="scientific">Neurospora crassa (strain ATCC 24698 / 74-OR23-1A / CBS 708.71 / DSM 1257 / FGSC 987)</name>
    <dbReference type="NCBI Taxonomy" id="367110"/>
    <lineage>
        <taxon>Eukaryota</taxon>
        <taxon>Fungi</taxon>
        <taxon>Dikarya</taxon>
        <taxon>Ascomycota</taxon>
        <taxon>Pezizomycotina</taxon>
        <taxon>Sordariomycetes</taxon>
        <taxon>Sordariomycetidae</taxon>
        <taxon>Sordariales</taxon>
        <taxon>Sordariaceae</taxon>
        <taxon>Neurospora</taxon>
    </lineage>
</organism>
<sequence>MDKNLNQLLKWSIEAQTAANAGQSYHSNGAPTPNNNSGPATGTGAVATSPAPQVTGSGPRPVDPEVLASLFGGPSEAELMKAAMEVITDPSPETTRENKLIAFDNFEQLIENLDNANLLEELSLWSPLISLLDHEDEDMRYHAAWCLGTAVQNNQKTQERLLAMGGVPKLVDLAMKEGESEKVRRKATYALSSAVRNYQPAMDVAADEMHKRGHEVLVNNGTKVDAADMDKVDEVIDVLRNKAKSA</sequence>
<gene>
    <name type="primary">fes-1</name>
    <name type="ORF">B7A16.080</name>
    <name type="ORF">NCU04172</name>
</gene>
<dbReference type="EMBL" id="CM002240">
    <property type="protein sequence ID" value="EAA31494.1"/>
    <property type="molecule type" value="Genomic_DNA"/>
</dbReference>
<dbReference type="EMBL" id="AL513445">
    <property type="protein sequence ID" value="CAC28721.1"/>
    <property type="molecule type" value="Genomic_DNA"/>
</dbReference>
<dbReference type="RefSeq" id="XP_960730.1">
    <property type="nucleotide sequence ID" value="XM_955637.3"/>
</dbReference>
<dbReference type="SMR" id="Q9C239"/>
<dbReference type="STRING" id="367110.Q9C239"/>
<dbReference type="PaxDb" id="5141-EFNCRP00000003831"/>
<dbReference type="EnsemblFungi" id="EAA31494">
    <property type="protein sequence ID" value="EAA31494"/>
    <property type="gene ID" value="NCU04172"/>
</dbReference>
<dbReference type="GeneID" id="3876868"/>
<dbReference type="KEGG" id="ncr:NCU04172"/>
<dbReference type="VEuPathDB" id="FungiDB:NCU04172"/>
<dbReference type="HOGENOM" id="CLU_084507_0_0_1"/>
<dbReference type="InParanoid" id="Q9C239"/>
<dbReference type="OMA" id="LKWSVEN"/>
<dbReference type="OrthoDB" id="10250458at2759"/>
<dbReference type="Proteomes" id="UP000001805">
    <property type="component" value="Chromosome 2, Linkage Group V"/>
</dbReference>
<dbReference type="GO" id="GO:0005829">
    <property type="term" value="C:cytosol"/>
    <property type="evidence" value="ECO:0007669"/>
    <property type="project" value="EnsemblFungi"/>
</dbReference>
<dbReference type="GO" id="GO:0005783">
    <property type="term" value="C:endoplasmic reticulum"/>
    <property type="evidence" value="ECO:0000318"/>
    <property type="project" value="GO_Central"/>
</dbReference>
<dbReference type="GO" id="GO:0000774">
    <property type="term" value="F:adenyl-nucleotide exchange factor activity"/>
    <property type="evidence" value="ECO:0000318"/>
    <property type="project" value="GO_Central"/>
</dbReference>
<dbReference type="GO" id="GO:0071629">
    <property type="term" value="P:cytoplasm protein quality control by the ubiquitin-proteasome system"/>
    <property type="evidence" value="ECO:0007669"/>
    <property type="project" value="EnsemblFungi"/>
</dbReference>
<dbReference type="GO" id="GO:0006417">
    <property type="term" value="P:regulation of translation"/>
    <property type="evidence" value="ECO:0007669"/>
    <property type="project" value="UniProtKB-KW"/>
</dbReference>
<dbReference type="FunFam" id="1.25.10.10:FF:000434">
    <property type="entry name" value="Hsp70 nucleotide exchange factor fes1"/>
    <property type="match status" value="1"/>
</dbReference>
<dbReference type="Gene3D" id="1.25.10.10">
    <property type="entry name" value="Leucine-rich Repeat Variant"/>
    <property type="match status" value="1"/>
</dbReference>
<dbReference type="InterPro" id="IPR011989">
    <property type="entry name" value="ARM-like"/>
</dbReference>
<dbReference type="InterPro" id="IPR016024">
    <property type="entry name" value="ARM-type_fold"/>
</dbReference>
<dbReference type="InterPro" id="IPR000225">
    <property type="entry name" value="Armadillo"/>
</dbReference>
<dbReference type="InterPro" id="IPR050693">
    <property type="entry name" value="Hsp70_NEF-Inhibitors"/>
</dbReference>
<dbReference type="InterPro" id="IPR013918">
    <property type="entry name" value="Nucleotide_exch_fac_Fes1"/>
</dbReference>
<dbReference type="PANTHER" id="PTHR19316:SF18">
    <property type="entry name" value="HSP70-BINDING PROTEIN 1"/>
    <property type="match status" value="1"/>
</dbReference>
<dbReference type="PANTHER" id="PTHR19316">
    <property type="entry name" value="PROTEIN FOLDING REGULATOR"/>
    <property type="match status" value="1"/>
</dbReference>
<dbReference type="Pfam" id="PF08609">
    <property type="entry name" value="Fes1"/>
    <property type="match status" value="1"/>
</dbReference>
<dbReference type="SMART" id="SM00185">
    <property type="entry name" value="ARM"/>
    <property type="match status" value="2"/>
</dbReference>
<dbReference type="SUPFAM" id="SSF48371">
    <property type="entry name" value="ARM repeat"/>
    <property type="match status" value="1"/>
</dbReference>
<dbReference type="PROSITE" id="PS50176">
    <property type="entry name" value="ARM_REPEAT"/>
    <property type="match status" value="1"/>
</dbReference>
<protein>
    <recommendedName>
        <fullName>Hsp70 nucleotide exchange factor fes-1</fullName>
    </recommendedName>
</protein>
<reference key="1">
    <citation type="journal article" date="2003" name="Nucleic Acids Res.">
        <title>What's in the genome of a filamentous fungus? Analysis of the Neurospora genome sequence.</title>
        <authorList>
            <person name="Mannhaupt G."/>
            <person name="Montrone C."/>
            <person name="Haase D."/>
            <person name="Mewes H.-W."/>
            <person name="Aign V."/>
            <person name="Hoheisel J.D."/>
            <person name="Fartmann B."/>
            <person name="Nyakatura G."/>
            <person name="Kempken F."/>
            <person name="Maier J."/>
            <person name="Schulte U."/>
        </authorList>
    </citation>
    <scope>NUCLEOTIDE SEQUENCE [LARGE SCALE GENOMIC DNA]</scope>
    <source>
        <strain>ATCC 24698 / 74-OR23-1A / CBS 708.71 / DSM 1257 / FGSC 987</strain>
    </source>
</reference>
<reference key="2">
    <citation type="journal article" date="2003" name="Nature">
        <title>The genome sequence of the filamentous fungus Neurospora crassa.</title>
        <authorList>
            <person name="Galagan J.E."/>
            <person name="Calvo S.E."/>
            <person name="Borkovich K.A."/>
            <person name="Selker E.U."/>
            <person name="Read N.D."/>
            <person name="Jaffe D.B."/>
            <person name="FitzHugh W."/>
            <person name="Ma L.-J."/>
            <person name="Smirnov S."/>
            <person name="Purcell S."/>
            <person name="Rehman B."/>
            <person name="Elkins T."/>
            <person name="Engels R."/>
            <person name="Wang S."/>
            <person name="Nielsen C.B."/>
            <person name="Butler J."/>
            <person name="Endrizzi M."/>
            <person name="Qui D."/>
            <person name="Ianakiev P."/>
            <person name="Bell-Pedersen D."/>
            <person name="Nelson M.A."/>
            <person name="Werner-Washburne M."/>
            <person name="Selitrennikoff C.P."/>
            <person name="Kinsey J.A."/>
            <person name="Braun E.L."/>
            <person name="Zelter A."/>
            <person name="Schulte U."/>
            <person name="Kothe G.O."/>
            <person name="Jedd G."/>
            <person name="Mewes H.-W."/>
            <person name="Staben C."/>
            <person name="Marcotte E."/>
            <person name="Greenberg D."/>
            <person name="Roy A."/>
            <person name="Foley K."/>
            <person name="Naylor J."/>
            <person name="Stange-Thomann N."/>
            <person name="Barrett R."/>
            <person name="Gnerre S."/>
            <person name="Kamal M."/>
            <person name="Kamvysselis M."/>
            <person name="Mauceli E.W."/>
            <person name="Bielke C."/>
            <person name="Rudd S."/>
            <person name="Frishman D."/>
            <person name="Krystofova S."/>
            <person name="Rasmussen C."/>
            <person name="Metzenberg R.L."/>
            <person name="Perkins D.D."/>
            <person name="Kroken S."/>
            <person name="Cogoni C."/>
            <person name="Macino G."/>
            <person name="Catcheside D.E.A."/>
            <person name="Li W."/>
            <person name="Pratt R.J."/>
            <person name="Osmani S.A."/>
            <person name="DeSouza C.P.C."/>
            <person name="Glass N.L."/>
            <person name="Orbach M.J."/>
            <person name="Berglund J.A."/>
            <person name="Voelker R."/>
            <person name="Yarden O."/>
            <person name="Plamann M."/>
            <person name="Seiler S."/>
            <person name="Dunlap J.C."/>
            <person name="Radford A."/>
            <person name="Aramayo R."/>
            <person name="Natvig D.O."/>
            <person name="Alex L.A."/>
            <person name="Mannhaupt G."/>
            <person name="Ebbole D.J."/>
            <person name="Freitag M."/>
            <person name="Paulsen I."/>
            <person name="Sachs M.S."/>
            <person name="Lander E.S."/>
            <person name="Nusbaum C."/>
            <person name="Birren B.W."/>
        </authorList>
    </citation>
    <scope>NUCLEOTIDE SEQUENCE [LARGE SCALE GENOMIC DNA]</scope>
    <source>
        <strain>ATCC 24698 / 74-OR23-1A / CBS 708.71 / DSM 1257 / FGSC 987</strain>
    </source>
</reference>
<name>FES1_NEUCR</name>
<evidence type="ECO:0000250" key="1"/>
<evidence type="ECO:0000256" key="2">
    <source>
        <dbReference type="SAM" id="MobiDB-lite"/>
    </source>
</evidence>
<evidence type="ECO:0000305" key="3"/>
<accession>Q9C239</accession>